<comment type="function">
    <text evidence="1">RNaseP catalyzes the removal of the 5'-leader sequence from pre-tRNA to produce the mature 5'-terminus. It can also cleave other RNA substrates such as 4.5S RNA. The protein component plays an auxiliary but essential role in vivo by binding to the 5'-leader sequence and broadening the substrate specificity of the ribozyme.</text>
</comment>
<comment type="catalytic activity">
    <reaction evidence="1">
        <text>Endonucleolytic cleavage of RNA, removing 5'-extranucleotides from tRNA precursor.</text>
        <dbReference type="EC" id="3.1.26.5"/>
    </reaction>
</comment>
<comment type="subunit">
    <text evidence="1">Consists of a catalytic RNA component (M1 or rnpB) and a protein subunit.</text>
</comment>
<comment type="similarity">
    <text evidence="1">Belongs to the RnpA family.</text>
</comment>
<comment type="sequence caution" evidence="2">
    <conflict type="erroneous initiation">
        <sequence resource="EMBL-CDS" id="BAB38062"/>
    </conflict>
    <text>Truncated N-terminus.</text>
</comment>
<accession>Q8XB43</accession>
<name>RNPA_ECO57</name>
<keyword id="KW-0255">Endonuclease</keyword>
<keyword id="KW-0378">Hydrolase</keyword>
<keyword id="KW-0540">Nuclease</keyword>
<keyword id="KW-1185">Reference proteome</keyword>
<keyword id="KW-0694">RNA-binding</keyword>
<keyword id="KW-0819">tRNA processing</keyword>
<dbReference type="EC" id="3.1.26.5" evidence="1"/>
<dbReference type="EMBL" id="AE005174">
    <property type="protein sequence ID" value="AAG58901.1"/>
    <property type="molecule type" value="Genomic_DNA"/>
</dbReference>
<dbReference type="EMBL" id="BA000007">
    <property type="protein sequence ID" value="BAB38062.2"/>
    <property type="status" value="ALT_INIT"/>
    <property type="molecule type" value="Genomic_DNA"/>
</dbReference>
<dbReference type="PIR" id="A86055">
    <property type="entry name" value="A86055"/>
</dbReference>
<dbReference type="PIR" id="G91208">
    <property type="entry name" value="G91208"/>
</dbReference>
<dbReference type="RefSeq" id="NP_312666.1">
    <property type="nucleotide sequence ID" value="NC_002695.1"/>
</dbReference>
<dbReference type="RefSeq" id="WP_000239733.1">
    <property type="nucleotide sequence ID" value="NZ_VOAI01000011.1"/>
</dbReference>
<dbReference type="SMR" id="Q8XB43"/>
<dbReference type="STRING" id="155864.Z5195"/>
<dbReference type="GeneID" id="915401"/>
<dbReference type="KEGG" id="ece:Z5195"/>
<dbReference type="KEGG" id="ecs:ECs_4639"/>
<dbReference type="PATRIC" id="fig|386585.9.peg.4849"/>
<dbReference type="eggNOG" id="COG0594">
    <property type="taxonomic scope" value="Bacteria"/>
</dbReference>
<dbReference type="HOGENOM" id="CLU_117179_11_0_6"/>
<dbReference type="OMA" id="LHQHELP"/>
<dbReference type="Proteomes" id="UP000000558">
    <property type="component" value="Chromosome"/>
</dbReference>
<dbReference type="Proteomes" id="UP000002519">
    <property type="component" value="Chromosome"/>
</dbReference>
<dbReference type="GO" id="GO:0030677">
    <property type="term" value="C:ribonuclease P complex"/>
    <property type="evidence" value="ECO:0007669"/>
    <property type="project" value="TreeGrafter"/>
</dbReference>
<dbReference type="GO" id="GO:0042781">
    <property type="term" value="F:3'-tRNA processing endoribonuclease activity"/>
    <property type="evidence" value="ECO:0007669"/>
    <property type="project" value="TreeGrafter"/>
</dbReference>
<dbReference type="GO" id="GO:0004526">
    <property type="term" value="F:ribonuclease P activity"/>
    <property type="evidence" value="ECO:0007669"/>
    <property type="project" value="UniProtKB-UniRule"/>
</dbReference>
<dbReference type="GO" id="GO:0000049">
    <property type="term" value="F:tRNA binding"/>
    <property type="evidence" value="ECO:0007669"/>
    <property type="project" value="UniProtKB-UniRule"/>
</dbReference>
<dbReference type="GO" id="GO:0001682">
    <property type="term" value="P:tRNA 5'-leader removal"/>
    <property type="evidence" value="ECO:0007669"/>
    <property type="project" value="UniProtKB-UniRule"/>
</dbReference>
<dbReference type="FunFam" id="3.30.230.10:FF:000016">
    <property type="entry name" value="Ribonuclease P protein component"/>
    <property type="match status" value="1"/>
</dbReference>
<dbReference type="Gene3D" id="3.30.230.10">
    <property type="match status" value="1"/>
</dbReference>
<dbReference type="HAMAP" id="MF_00227">
    <property type="entry name" value="RNase_P"/>
    <property type="match status" value="1"/>
</dbReference>
<dbReference type="InterPro" id="IPR020568">
    <property type="entry name" value="Ribosomal_Su5_D2-typ_SF"/>
</dbReference>
<dbReference type="InterPro" id="IPR014721">
    <property type="entry name" value="Ribsml_uS5_D2-typ_fold_subgr"/>
</dbReference>
<dbReference type="InterPro" id="IPR000100">
    <property type="entry name" value="RNase_P"/>
</dbReference>
<dbReference type="InterPro" id="IPR020539">
    <property type="entry name" value="RNase_P_CS"/>
</dbReference>
<dbReference type="NCBIfam" id="TIGR00188">
    <property type="entry name" value="rnpA"/>
    <property type="match status" value="1"/>
</dbReference>
<dbReference type="PANTHER" id="PTHR33992">
    <property type="entry name" value="RIBONUCLEASE P PROTEIN COMPONENT"/>
    <property type="match status" value="1"/>
</dbReference>
<dbReference type="PANTHER" id="PTHR33992:SF1">
    <property type="entry name" value="RIBONUCLEASE P PROTEIN COMPONENT"/>
    <property type="match status" value="1"/>
</dbReference>
<dbReference type="Pfam" id="PF00825">
    <property type="entry name" value="Ribonuclease_P"/>
    <property type="match status" value="1"/>
</dbReference>
<dbReference type="SUPFAM" id="SSF54211">
    <property type="entry name" value="Ribosomal protein S5 domain 2-like"/>
    <property type="match status" value="1"/>
</dbReference>
<dbReference type="PROSITE" id="PS00648">
    <property type="entry name" value="RIBONUCLEASE_P"/>
    <property type="match status" value="1"/>
</dbReference>
<feature type="chain" id="PRO_0000198459" description="Ribonuclease P protein component">
    <location>
        <begin position="1"/>
        <end position="119"/>
    </location>
</feature>
<protein>
    <recommendedName>
        <fullName evidence="1">Ribonuclease P protein component</fullName>
        <shortName evidence="1">RNase P protein</shortName>
        <shortName evidence="1">RNaseP protein</shortName>
        <ecNumber evidence="1">3.1.26.5</ecNumber>
    </recommendedName>
    <alternativeName>
        <fullName evidence="1">Protein C5</fullName>
    </alternativeName>
</protein>
<gene>
    <name evidence="1" type="primary">rnpA</name>
    <name type="ordered locus">Z5195</name>
    <name type="ordered locus">ECs4639</name>
</gene>
<sequence>MVKLAFPRELRLLTPSQFTFVFQQPQRAGTPQITILGRLNSLGHPRIGLTVAKKNVRRAHERNRIKRLTRESFRLRQHELPAMDFVVVAKKGVANLDNRALSEALEKLWRRHCRLARGS</sequence>
<proteinExistence type="inferred from homology"/>
<reference key="1">
    <citation type="journal article" date="2001" name="Nature">
        <title>Genome sequence of enterohaemorrhagic Escherichia coli O157:H7.</title>
        <authorList>
            <person name="Perna N.T."/>
            <person name="Plunkett G. III"/>
            <person name="Burland V."/>
            <person name="Mau B."/>
            <person name="Glasner J.D."/>
            <person name="Rose D.J."/>
            <person name="Mayhew G.F."/>
            <person name="Evans P.S."/>
            <person name="Gregor J."/>
            <person name="Kirkpatrick H.A."/>
            <person name="Posfai G."/>
            <person name="Hackett J."/>
            <person name="Klink S."/>
            <person name="Boutin A."/>
            <person name="Shao Y."/>
            <person name="Miller L."/>
            <person name="Grotbeck E.J."/>
            <person name="Davis N.W."/>
            <person name="Lim A."/>
            <person name="Dimalanta E.T."/>
            <person name="Potamousis K."/>
            <person name="Apodaca J."/>
            <person name="Anantharaman T.S."/>
            <person name="Lin J."/>
            <person name="Yen G."/>
            <person name="Schwartz D.C."/>
            <person name="Welch R.A."/>
            <person name="Blattner F.R."/>
        </authorList>
    </citation>
    <scope>NUCLEOTIDE SEQUENCE [LARGE SCALE GENOMIC DNA]</scope>
    <source>
        <strain>O157:H7 / EDL933 / ATCC 700927 / EHEC</strain>
    </source>
</reference>
<reference key="2">
    <citation type="journal article" date="2001" name="DNA Res.">
        <title>Complete genome sequence of enterohemorrhagic Escherichia coli O157:H7 and genomic comparison with a laboratory strain K-12.</title>
        <authorList>
            <person name="Hayashi T."/>
            <person name="Makino K."/>
            <person name="Ohnishi M."/>
            <person name="Kurokawa K."/>
            <person name="Ishii K."/>
            <person name="Yokoyama K."/>
            <person name="Han C.-G."/>
            <person name="Ohtsubo E."/>
            <person name="Nakayama K."/>
            <person name="Murata T."/>
            <person name="Tanaka M."/>
            <person name="Tobe T."/>
            <person name="Iida T."/>
            <person name="Takami H."/>
            <person name="Honda T."/>
            <person name="Sasakawa C."/>
            <person name="Ogasawara N."/>
            <person name="Yasunaga T."/>
            <person name="Kuhara S."/>
            <person name="Shiba T."/>
            <person name="Hattori M."/>
            <person name="Shinagawa H."/>
        </authorList>
    </citation>
    <scope>NUCLEOTIDE SEQUENCE [LARGE SCALE GENOMIC DNA]</scope>
    <source>
        <strain>O157:H7 / Sakai / RIMD 0509952 / EHEC</strain>
    </source>
</reference>
<evidence type="ECO:0000255" key="1">
    <source>
        <dbReference type="HAMAP-Rule" id="MF_00227"/>
    </source>
</evidence>
<evidence type="ECO:0000305" key="2"/>
<organism>
    <name type="scientific">Escherichia coli O157:H7</name>
    <dbReference type="NCBI Taxonomy" id="83334"/>
    <lineage>
        <taxon>Bacteria</taxon>
        <taxon>Pseudomonadati</taxon>
        <taxon>Pseudomonadota</taxon>
        <taxon>Gammaproteobacteria</taxon>
        <taxon>Enterobacterales</taxon>
        <taxon>Enterobacteriaceae</taxon>
        <taxon>Escherichia</taxon>
    </lineage>
</organism>